<comment type="function">
    <text evidence="1">Catalyzes the condensation of isopentenyl diphosphate (IPP) with allylic pyrophosphates generating different type of terpenoids.</text>
</comment>
<comment type="cofactor">
    <cofactor evidence="1">
        <name>Mg(2+)</name>
        <dbReference type="ChEBI" id="CHEBI:18420"/>
    </cofactor>
    <text evidence="1">Binds 2 magnesium ions per subunit.</text>
</comment>
<comment type="subunit">
    <text evidence="1">Homodimer.</text>
</comment>
<comment type="similarity">
    <text evidence="1">Belongs to the UPP synthase family.</text>
</comment>
<protein>
    <recommendedName>
        <fullName evidence="1">Isoprenyl transferase</fullName>
        <ecNumber evidence="1">2.5.1.-</ecNumber>
    </recommendedName>
</protein>
<accession>Q7V6T7</accession>
<sequence>MSRRSATSSGHPKVCACPSGLDPYRLPNHVAVIMDGNGRWAKARGLPRMVGHRAGVEALKRTLRLCSDWGIGALTAYAFSTENWSRPGDEVNFLMTLFERVLQRELESLEREKVRIRFLGDLEGLPSGLQELISEATELTVRNNGIHFNVCTNYGGRRELVLAAQKLAQRAARGDLDPTLIDENSFEAELLTAGEVDPDLLIRTSGERRISNFLLWQLAYAEIHVTDVCWPDFDEVALTKALFDYQSRCRRFGGLDPIAANHLGS</sequence>
<evidence type="ECO:0000255" key="1">
    <source>
        <dbReference type="HAMAP-Rule" id="MF_01139"/>
    </source>
</evidence>
<gene>
    <name evidence="1" type="primary">uppS</name>
    <name type="ordered locus">PMT_1057</name>
</gene>
<feature type="chain" id="PRO_0000123652" description="Isoprenyl transferase">
    <location>
        <begin position="1"/>
        <end position="265"/>
    </location>
</feature>
<feature type="active site" evidence="1">
    <location>
        <position position="35"/>
    </location>
</feature>
<feature type="active site" description="Proton acceptor" evidence="1">
    <location>
        <position position="83"/>
    </location>
</feature>
<feature type="binding site" evidence="1">
    <location>
        <position position="35"/>
    </location>
    <ligand>
        <name>Mg(2+)</name>
        <dbReference type="ChEBI" id="CHEBI:18420"/>
    </ligand>
</feature>
<feature type="binding site" evidence="1">
    <location>
        <begin position="36"/>
        <end position="39"/>
    </location>
    <ligand>
        <name>substrate</name>
    </ligand>
</feature>
<feature type="binding site" evidence="1">
    <location>
        <position position="40"/>
    </location>
    <ligand>
        <name>substrate</name>
    </ligand>
</feature>
<feature type="binding site" evidence="1">
    <location>
        <position position="48"/>
    </location>
    <ligand>
        <name>substrate</name>
    </ligand>
</feature>
<feature type="binding site" evidence="1">
    <location>
        <position position="52"/>
    </location>
    <ligand>
        <name>substrate</name>
    </ligand>
</feature>
<feature type="binding site" evidence="1">
    <location>
        <begin position="80"/>
        <end position="82"/>
    </location>
    <ligand>
        <name>substrate</name>
    </ligand>
</feature>
<feature type="binding site" evidence="1">
    <location>
        <position position="84"/>
    </location>
    <ligand>
        <name>substrate</name>
    </ligand>
</feature>
<feature type="binding site" evidence="1">
    <location>
        <position position="86"/>
    </location>
    <ligand>
        <name>substrate</name>
    </ligand>
</feature>
<feature type="binding site" evidence="1">
    <location>
        <position position="203"/>
    </location>
    <ligand>
        <name>substrate</name>
    </ligand>
</feature>
<feature type="binding site" evidence="1">
    <location>
        <begin position="209"/>
        <end position="211"/>
    </location>
    <ligand>
        <name>substrate</name>
    </ligand>
</feature>
<feature type="binding site" evidence="1">
    <location>
        <position position="222"/>
    </location>
    <ligand>
        <name>Mg(2+)</name>
        <dbReference type="ChEBI" id="CHEBI:18420"/>
    </ligand>
</feature>
<reference key="1">
    <citation type="journal article" date="2003" name="Nature">
        <title>Genome divergence in two Prochlorococcus ecotypes reflects oceanic niche differentiation.</title>
        <authorList>
            <person name="Rocap G."/>
            <person name="Larimer F.W."/>
            <person name="Lamerdin J.E."/>
            <person name="Malfatti S."/>
            <person name="Chain P."/>
            <person name="Ahlgren N.A."/>
            <person name="Arellano A."/>
            <person name="Coleman M."/>
            <person name="Hauser L."/>
            <person name="Hess W.R."/>
            <person name="Johnson Z.I."/>
            <person name="Land M.L."/>
            <person name="Lindell D."/>
            <person name="Post A.F."/>
            <person name="Regala W."/>
            <person name="Shah M."/>
            <person name="Shaw S.L."/>
            <person name="Steglich C."/>
            <person name="Sullivan M.B."/>
            <person name="Ting C.S."/>
            <person name="Tolonen A."/>
            <person name="Webb E.A."/>
            <person name="Zinser E.R."/>
            <person name="Chisholm S.W."/>
        </authorList>
    </citation>
    <scope>NUCLEOTIDE SEQUENCE [LARGE SCALE GENOMIC DNA]</scope>
    <source>
        <strain>MIT 9313</strain>
    </source>
</reference>
<name>ISPT_PROMM</name>
<dbReference type="EC" id="2.5.1.-" evidence="1"/>
<dbReference type="EMBL" id="BX548175">
    <property type="protein sequence ID" value="CAE21232.1"/>
    <property type="molecule type" value="Genomic_DNA"/>
</dbReference>
<dbReference type="RefSeq" id="WP_011130429.1">
    <property type="nucleotide sequence ID" value="NC_005071.1"/>
</dbReference>
<dbReference type="SMR" id="Q7V6T7"/>
<dbReference type="KEGG" id="pmt:PMT_1057"/>
<dbReference type="eggNOG" id="COG0020">
    <property type="taxonomic scope" value="Bacteria"/>
</dbReference>
<dbReference type="HOGENOM" id="CLU_038505_1_1_3"/>
<dbReference type="OrthoDB" id="4191603at2"/>
<dbReference type="Proteomes" id="UP000001423">
    <property type="component" value="Chromosome"/>
</dbReference>
<dbReference type="GO" id="GO:0045547">
    <property type="term" value="F:ditrans,polycis-polyprenyl diphosphate synthase [(2E,6E)-farnesyl diphosphate specific] activity"/>
    <property type="evidence" value="ECO:0007669"/>
    <property type="project" value="TreeGrafter"/>
</dbReference>
<dbReference type="GO" id="GO:0000287">
    <property type="term" value="F:magnesium ion binding"/>
    <property type="evidence" value="ECO:0007669"/>
    <property type="project" value="UniProtKB-UniRule"/>
</dbReference>
<dbReference type="GO" id="GO:0016094">
    <property type="term" value="P:polyprenol biosynthetic process"/>
    <property type="evidence" value="ECO:0007669"/>
    <property type="project" value="TreeGrafter"/>
</dbReference>
<dbReference type="CDD" id="cd00475">
    <property type="entry name" value="Cis_IPPS"/>
    <property type="match status" value="1"/>
</dbReference>
<dbReference type="FunFam" id="3.40.1180.10:FF:000001">
    <property type="entry name" value="(2E,6E)-farnesyl-diphosphate-specific ditrans,polycis-undecaprenyl-diphosphate synthase"/>
    <property type="match status" value="1"/>
</dbReference>
<dbReference type="Gene3D" id="3.40.1180.10">
    <property type="entry name" value="Decaprenyl diphosphate synthase-like"/>
    <property type="match status" value="1"/>
</dbReference>
<dbReference type="HAMAP" id="MF_01139">
    <property type="entry name" value="ISPT"/>
    <property type="match status" value="1"/>
</dbReference>
<dbReference type="InterPro" id="IPR001441">
    <property type="entry name" value="UPP_synth-like"/>
</dbReference>
<dbReference type="InterPro" id="IPR018520">
    <property type="entry name" value="UPP_synth-like_CS"/>
</dbReference>
<dbReference type="InterPro" id="IPR036424">
    <property type="entry name" value="UPP_synth-like_sf"/>
</dbReference>
<dbReference type="NCBIfam" id="NF011405">
    <property type="entry name" value="PRK14830.1"/>
    <property type="match status" value="1"/>
</dbReference>
<dbReference type="NCBIfam" id="NF011406">
    <property type="entry name" value="PRK14831.1"/>
    <property type="match status" value="1"/>
</dbReference>
<dbReference type="NCBIfam" id="TIGR00055">
    <property type="entry name" value="uppS"/>
    <property type="match status" value="1"/>
</dbReference>
<dbReference type="PANTHER" id="PTHR10291:SF0">
    <property type="entry name" value="DEHYDRODOLICHYL DIPHOSPHATE SYNTHASE 2"/>
    <property type="match status" value="1"/>
</dbReference>
<dbReference type="PANTHER" id="PTHR10291">
    <property type="entry name" value="DEHYDRODOLICHYL DIPHOSPHATE SYNTHASE FAMILY MEMBER"/>
    <property type="match status" value="1"/>
</dbReference>
<dbReference type="Pfam" id="PF01255">
    <property type="entry name" value="Prenyltransf"/>
    <property type="match status" value="1"/>
</dbReference>
<dbReference type="SUPFAM" id="SSF64005">
    <property type="entry name" value="Undecaprenyl diphosphate synthase"/>
    <property type="match status" value="1"/>
</dbReference>
<dbReference type="PROSITE" id="PS01066">
    <property type="entry name" value="UPP_SYNTHASE"/>
    <property type="match status" value="1"/>
</dbReference>
<organism>
    <name type="scientific">Prochlorococcus marinus (strain MIT 9313)</name>
    <dbReference type="NCBI Taxonomy" id="74547"/>
    <lineage>
        <taxon>Bacteria</taxon>
        <taxon>Bacillati</taxon>
        <taxon>Cyanobacteriota</taxon>
        <taxon>Cyanophyceae</taxon>
        <taxon>Synechococcales</taxon>
        <taxon>Prochlorococcaceae</taxon>
        <taxon>Prochlorococcus</taxon>
    </lineage>
</organism>
<keyword id="KW-0460">Magnesium</keyword>
<keyword id="KW-0479">Metal-binding</keyword>
<keyword id="KW-1185">Reference proteome</keyword>
<keyword id="KW-0808">Transferase</keyword>
<proteinExistence type="inferred from homology"/>